<comment type="function">
    <text evidence="1">Catalyzes the anti-1,4-elimination of the C-3 phosphate and the C-6 proR hydrogen from 5-enolpyruvylshikimate-3-phosphate (EPSP) to yield chorismate, which is the branch point compound that serves as the starting substrate for the three terminal pathways of aromatic amino acid biosynthesis. This reaction introduces a second double bond into the aromatic ring system.</text>
</comment>
<comment type="catalytic activity">
    <reaction evidence="1">
        <text>5-O-(1-carboxyvinyl)-3-phosphoshikimate = chorismate + phosphate</text>
        <dbReference type="Rhea" id="RHEA:21020"/>
        <dbReference type="ChEBI" id="CHEBI:29748"/>
        <dbReference type="ChEBI" id="CHEBI:43474"/>
        <dbReference type="ChEBI" id="CHEBI:57701"/>
        <dbReference type="EC" id="4.2.3.5"/>
    </reaction>
</comment>
<comment type="cofactor">
    <cofactor evidence="1">
        <name>FMNH2</name>
        <dbReference type="ChEBI" id="CHEBI:57618"/>
    </cofactor>
    <text evidence="1">Reduced FMN (FMNH(2)).</text>
</comment>
<comment type="pathway">
    <text evidence="1">Metabolic intermediate biosynthesis; chorismate biosynthesis; chorismate from D-erythrose 4-phosphate and phosphoenolpyruvate: step 7/7.</text>
</comment>
<comment type="subunit">
    <text evidence="1">Homotetramer.</text>
</comment>
<comment type="similarity">
    <text evidence="1">Belongs to the chorismate synthase family.</text>
</comment>
<evidence type="ECO:0000255" key="1">
    <source>
        <dbReference type="HAMAP-Rule" id="MF_00300"/>
    </source>
</evidence>
<protein>
    <recommendedName>
        <fullName evidence="1">Chorismate synthase</fullName>
        <shortName evidence="1">CS</shortName>
        <ecNumber evidence="1">4.2.3.5</ecNumber>
    </recommendedName>
    <alternativeName>
        <fullName evidence="1">5-enolpyruvylshikimate-3-phosphate phospholyase</fullName>
    </alternativeName>
</protein>
<name>AROC_PARUW</name>
<sequence length="367" mass="39786">MASNSFGHLFKMTTWGESHGKAMGVVIDGCPSGIFLTEQDINQELYWRKPGRNELTSPRLEEDQVEILSGLFNGQTTGAPISLIIWNKDVNSSAYEGMHTLFRPGHANYTYSNKYGIFDYRGGGRASARETVCRVAAGAIAKKILSDVGISVVAYLYSIGEIEGKIELSDHVNNVPLLQQTIRNSSLFSPSPAAEKMKGVLEEARKEGDSVGGIVEAMAFNVPCGWGDPVYEKLEANLAKAMLSIPASKGFEIGEGFKASQMRGTEHNDLFGIQNDQISFVTNHAGGTLGGISTGEPIIIKVPFKPTSSINKVQTSLNEKGEICDYRLPTGSRHDPCVAIRAVPVVEAMMALVLVDAFLMSKFCQLN</sequence>
<feature type="chain" id="PRO_0000140622" description="Chorismate synthase">
    <location>
        <begin position="1"/>
        <end position="367"/>
    </location>
</feature>
<feature type="binding site" evidence="1">
    <location>
        <position position="48"/>
    </location>
    <ligand>
        <name>NADP(+)</name>
        <dbReference type="ChEBI" id="CHEBI:58349"/>
    </ligand>
</feature>
<feature type="binding site" evidence="1">
    <location>
        <begin position="125"/>
        <end position="127"/>
    </location>
    <ligand>
        <name>FMN</name>
        <dbReference type="ChEBI" id="CHEBI:58210"/>
    </ligand>
</feature>
<feature type="binding site" evidence="1">
    <location>
        <position position="290"/>
    </location>
    <ligand>
        <name>FMN</name>
        <dbReference type="ChEBI" id="CHEBI:58210"/>
    </ligand>
</feature>
<feature type="binding site" evidence="1">
    <location>
        <begin position="305"/>
        <end position="309"/>
    </location>
    <ligand>
        <name>FMN</name>
        <dbReference type="ChEBI" id="CHEBI:58210"/>
    </ligand>
</feature>
<feature type="binding site" evidence="1">
    <location>
        <position position="333"/>
    </location>
    <ligand>
        <name>FMN</name>
        <dbReference type="ChEBI" id="CHEBI:58210"/>
    </ligand>
</feature>
<proteinExistence type="inferred from homology"/>
<accession>Q6MCU1</accession>
<keyword id="KW-0028">Amino-acid biosynthesis</keyword>
<keyword id="KW-0057">Aromatic amino acid biosynthesis</keyword>
<keyword id="KW-0274">FAD</keyword>
<keyword id="KW-0285">Flavoprotein</keyword>
<keyword id="KW-0288">FMN</keyword>
<keyword id="KW-0456">Lyase</keyword>
<keyword id="KW-0521">NADP</keyword>
<keyword id="KW-1185">Reference proteome</keyword>
<dbReference type="EC" id="4.2.3.5" evidence="1"/>
<dbReference type="EMBL" id="BX908798">
    <property type="protein sequence ID" value="CAF23608.1"/>
    <property type="molecule type" value="Genomic_DNA"/>
</dbReference>
<dbReference type="RefSeq" id="WP_011175434.1">
    <property type="nucleotide sequence ID" value="NC_005861.2"/>
</dbReference>
<dbReference type="SMR" id="Q6MCU1"/>
<dbReference type="STRING" id="264201.pc0884"/>
<dbReference type="KEGG" id="pcu:PC_RS04265"/>
<dbReference type="eggNOG" id="COG0082">
    <property type="taxonomic scope" value="Bacteria"/>
</dbReference>
<dbReference type="HOGENOM" id="CLU_034547_0_2_0"/>
<dbReference type="OrthoDB" id="9771806at2"/>
<dbReference type="UniPathway" id="UPA00053">
    <property type="reaction ID" value="UER00090"/>
</dbReference>
<dbReference type="Proteomes" id="UP000000529">
    <property type="component" value="Chromosome"/>
</dbReference>
<dbReference type="GO" id="GO:0005829">
    <property type="term" value="C:cytosol"/>
    <property type="evidence" value="ECO:0007669"/>
    <property type="project" value="TreeGrafter"/>
</dbReference>
<dbReference type="GO" id="GO:0004107">
    <property type="term" value="F:chorismate synthase activity"/>
    <property type="evidence" value="ECO:0007669"/>
    <property type="project" value="UniProtKB-UniRule"/>
</dbReference>
<dbReference type="GO" id="GO:0010181">
    <property type="term" value="F:FMN binding"/>
    <property type="evidence" value="ECO:0007669"/>
    <property type="project" value="TreeGrafter"/>
</dbReference>
<dbReference type="GO" id="GO:0008652">
    <property type="term" value="P:amino acid biosynthetic process"/>
    <property type="evidence" value="ECO:0007669"/>
    <property type="project" value="UniProtKB-KW"/>
</dbReference>
<dbReference type="GO" id="GO:0009073">
    <property type="term" value="P:aromatic amino acid family biosynthetic process"/>
    <property type="evidence" value="ECO:0007669"/>
    <property type="project" value="UniProtKB-KW"/>
</dbReference>
<dbReference type="GO" id="GO:0009423">
    <property type="term" value="P:chorismate biosynthetic process"/>
    <property type="evidence" value="ECO:0007669"/>
    <property type="project" value="UniProtKB-UniRule"/>
</dbReference>
<dbReference type="CDD" id="cd07304">
    <property type="entry name" value="Chorismate_synthase"/>
    <property type="match status" value="1"/>
</dbReference>
<dbReference type="Gene3D" id="3.60.150.10">
    <property type="entry name" value="Chorismate synthase AroC"/>
    <property type="match status" value="1"/>
</dbReference>
<dbReference type="HAMAP" id="MF_00300">
    <property type="entry name" value="Chorismate_synth"/>
    <property type="match status" value="1"/>
</dbReference>
<dbReference type="InterPro" id="IPR000453">
    <property type="entry name" value="Chorismate_synth"/>
</dbReference>
<dbReference type="InterPro" id="IPR035904">
    <property type="entry name" value="Chorismate_synth_AroC_sf"/>
</dbReference>
<dbReference type="InterPro" id="IPR020541">
    <property type="entry name" value="Chorismate_synthase_CS"/>
</dbReference>
<dbReference type="NCBIfam" id="TIGR00033">
    <property type="entry name" value="aroC"/>
    <property type="match status" value="1"/>
</dbReference>
<dbReference type="NCBIfam" id="NF003793">
    <property type="entry name" value="PRK05382.1"/>
    <property type="match status" value="1"/>
</dbReference>
<dbReference type="PANTHER" id="PTHR21085">
    <property type="entry name" value="CHORISMATE SYNTHASE"/>
    <property type="match status" value="1"/>
</dbReference>
<dbReference type="PANTHER" id="PTHR21085:SF0">
    <property type="entry name" value="CHORISMATE SYNTHASE"/>
    <property type="match status" value="1"/>
</dbReference>
<dbReference type="Pfam" id="PF01264">
    <property type="entry name" value="Chorismate_synt"/>
    <property type="match status" value="1"/>
</dbReference>
<dbReference type="PIRSF" id="PIRSF001456">
    <property type="entry name" value="Chorismate_synth"/>
    <property type="match status" value="1"/>
</dbReference>
<dbReference type="SUPFAM" id="SSF103263">
    <property type="entry name" value="Chorismate synthase, AroC"/>
    <property type="match status" value="1"/>
</dbReference>
<dbReference type="PROSITE" id="PS00787">
    <property type="entry name" value="CHORISMATE_SYNTHASE_1"/>
    <property type="match status" value="1"/>
</dbReference>
<dbReference type="PROSITE" id="PS00788">
    <property type="entry name" value="CHORISMATE_SYNTHASE_2"/>
    <property type="match status" value="1"/>
</dbReference>
<dbReference type="PROSITE" id="PS00789">
    <property type="entry name" value="CHORISMATE_SYNTHASE_3"/>
    <property type="match status" value="1"/>
</dbReference>
<organism>
    <name type="scientific">Protochlamydia amoebophila (strain UWE25)</name>
    <dbReference type="NCBI Taxonomy" id="264201"/>
    <lineage>
        <taxon>Bacteria</taxon>
        <taxon>Pseudomonadati</taxon>
        <taxon>Chlamydiota</taxon>
        <taxon>Chlamydiia</taxon>
        <taxon>Parachlamydiales</taxon>
        <taxon>Parachlamydiaceae</taxon>
        <taxon>Candidatus Protochlamydia</taxon>
    </lineage>
</organism>
<reference key="1">
    <citation type="journal article" date="2004" name="Science">
        <title>Illuminating the evolutionary history of chlamydiae.</title>
        <authorList>
            <person name="Horn M."/>
            <person name="Collingro A."/>
            <person name="Schmitz-Esser S."/>
            <person name="Beier C.L."/>
            <person name="Purkhold U."/>
            <person name="Fartmann B."/>
            <person name="Brandt P."/>
            <person name="Nyakatura G.J."/>
            <person name="Droege M."/>
            <person name="Frishman D."/>
            <person name="Rattei T."/>
            <person name="Mewes H.-W."/>
            <person name="Wagner M."/>
        </authorList>
    </citation>
    <scope>NUCLEOTIDE SEQUENCE [LARGE SCALE GENOMIC DNA]</scope>
    <source>
        <strain>UWE25</strain>
    </source>
</reference>
<gene>
    <name evidence="1" type="primary">aroC</name>
    <name type="ordered locus">pc0884</name>
</gene>